<organism>
    <name type="scientific">Staphylococcus aureus (strain Newman)</name>
    <dbReference type="NCBI Taxonomy" id="426430"/>
    <lineage>
        <taxon>Bacteria</taxon>
        <taxon>Bacillati</taxon>
        <taxon>Bacillota</taxon>
        <taxon>Bacilli</taxon>
        <taxon>Bacillales</taxon>
        <taxon>Staphylococcaceae</taxon>
        <taxon>Staphylococcus</taxon>
    </lineage>
</organism>
<evidence type="ECO:0000250" key="1">
    <source>
        <dbReference type="UniProtKB" id="O33599"/>
    </source>
</evidence>
<evidence type="ECO:0000255" key="2"/>
<evidence type="ECO:0000256" key="3">
    <source>
        <dbReference type="SAM" id="MobiDB-lite"/>
    </source>
</evidence>
<evidence type="ECO:0000269" key="4">
    <source>
    </source>
</evidence>
<evidence type="ECO:0000305" key="5"/>
<evidence type="ECO:0000305" key="6">
    <source>
    </source>
</evidence>
<keyword id="KW-0961">Cell wall biogenesis/degradation</keyword>
<keyword id="KW-0378">Hydrolase</keyword>
<keyword id="KW-0479">Metal-binding</keyword>
<keyword id="KW-0482">Metalloprotease</keyword>
<keyword id="KW-0645">Protease</keyword>
<keyword id="KW-0964">Secreted</keyword>
<keyword id="KW-0732">Signal</keyword>
<keyword id="KW-0843">Virulence</keyword>
<keyword id="KW-0862">Zinc</keyword>
<keyword id="KW-0865">Zymogen</keyword>
<proteinExistence type="inferred from homology"/>
<feature type="signal peptide" evidence="2">
    <location>
        <begin position="1"/>
        <end position="25"/>
    </location>
</feature>
<feature type="chain" id="PRO_0000445585" description="Glycyl-glycine endopeptidase LytM">
    <location>
        <begin position="26"/>
        <end position="316"/>
    </location>
</feature>
<feature type="region of interest" description="Disordered" evidence="3">
    <location>
        <begin position="133"/>
        <end position="189"/>
    </location>
</feature>
<feature type="compositionally biased region" description="Polar residues" evidence="3">
    <location>
        <begin position="145"/>
        <end position="158"/>
    </location>
</feature>
<feature type="compositionally biased region" description="Polar residues" evidence="3">
    <location>
        <begin position="166"/>
        <end position="181"/>
    </location>
</feature>
<feature type="binding site" evidence="1">
    <location>
        <position position="117"/>
    </location>
    <ligand>
        <name>Zn(2+)</name>
        <dbReference type="ChEBI" id="CHEBI:29105"/>
    </ligand>
</feature>
<feature type="binding site" evidence="1">
    <location>
        <position position="210"/>
    </location>
    <ligand>
        <name>Zn(2+)</name>
        <dbReference type="ChEBI" id="CHEBI:29105"/>
    </ligand>
</feature>
<feature type="binding site" evidence="1">
    <location>
        <position position="214"/>
    </location>
    <ligand>
        <name>Zn(2+)</name>
        <dbReference type="ChEBI" id="CHEBI:29105"/>
    </ligand>
</feature>
<feature type="binding site" evidence="1">
    <location>
        <position position="293"/>
    </location>
    <ligand>
        <name>Zn(2+)</name>
        <dbReference type="ChEBI" id="CHEBI:29105"/>
    </ligand>
</feature>
<dbReference type="EC" id="3.4.24.75"/>
<dbReference type="EMBL" id="AP009351">
    <property type="protein sequence ID" value="BAF66482.1"/>
    <property type="status" value="ALT_INIT"/>
    <property type="molecule type" value="Genomic_DNA"/>
</dbReference>
<dbReference type="RefSeq" id="WP_000736798.1">
    <property type="nucleotide sequence ID" value="NZ_JBBIAE010000003.1"/>
</dbReference>
<dbReference type="SMR" id="A0A0H3K6J4"/>
<dbReference type="KEGG" id="sae:NWMN_0210"/>
<dbReference type="HOGENOM" id="CLU_073067_0_0_9"/>
<dbReference type="Proteomes" id="UP000006386">
    <property type="component" value="Chromosome"/>
</dbReference>
<dbReference type="GO" id="GO:0005576">
    <property type="term" value="C:extracellular region"/>
    <property type="evidence" value="ECO:0007669"/>
    <property type="project" value="UniProtKB-SubCell"/>
</dbReference>
<dbReference type="GO" id="GO:0046872">
    <property type="term" value="F:metal ion binding"/>
    <property type="evidence" value="ECO:0007669"/>
    <property type="project" value="UniProtKB-KW"/>
</dbReference>
<dbReference type="GO" id="GO:0004222">
    <property type="term" value="F:metalloendopeptidase activity"/>
    <property type="evidence" value="ECO:0007669"/>
    <property type="project" value="TreeGrafter"/>
</dbReference>
<dbReference type="GO" id="GO:0071555">
    <property type="term" value="P:cell wall organization"/>
    <property type="evidence" value="ECO:0007669"/>
    <property type="project" value="UniProtKB-KW"/>
</dbReference>
<dbReference type="GO" id="GO:0006508">
    <property type="term" value="P:proteolysis"/>
    <property type="evidence" value="ECO:0007669"/>
    <property type="project" value="UniProtKB-KW"/>
</dbReference>
<dbReference type="CDD" id="cd12797">
    <property type="entry name" value="M23_peptidase"/>
    <property type="match status" value="1"/>
</dbReference>
<dbReference type="FunFam" id="2.70.70.10:FF:000027">
    <property type="entry name" value="Glycyl-glycine endopeptidase LytM"/>
    <property type="match status" value="1"/>
</dbReference>
<dbReference type="Gene3D" id="2.40.50.290">
    <property type="match status" value="1"/>
</dbReference>
<dbReference type="Gene3D" id="2.70.70.10">
    <property type="entry name" value="Glucose Permease (Domain IIA)"/>
    <property type="match status" value="1"/>
</dbReference>
<dbReference type="InterPro" id="IPR050570">
    <property type="entry name" value="Cell_wall_metabolism_enzyme"/>
</dbReference>
<dbReference type="InterPro" id="IPR011055">
    <property type="entry name" value="Dup_hybrid_motif"/>
</dbReference>
<dbReference type="InterPro" id="IPR016047">
    <property type="entry name" value="Peptidase_M23"/>
</dbReference>
<dbReference type="PANTHER" id="PTHR21666:SF270">
    <property type="entry name" value="MUREIN HYDROLASE ACTIVATOR ENVC"/>
    <property type="match status" value="1"/>
</dbReference>
<dbReference type="PANTHER" id="PTHR21666">
    <property type="entry name" value="PEPTIDASE-RELATED"/>
    <property type="match status" value="1"/>
</dbReference>
<dbReference type="Pfam" id="PF01551">
    <property type="entry name" value="Peptidase_M23"/>
    <property type="match status" value="1"/>
</dbReference>
<dbReference type="SUPFAM" id="SSF51261">
    <property type="entry name" value="Duplicated hybrid motif"/>
    <property type="match status" value="1"/>
</dbReference>
<comment type="function">
    <text evidence="1 4">Peptidoglycan hydrolase (autolysin) specifically acting on polyglycine interpeptide bridges of the cell wall peptidoglycan (By similarity). Releases SpA, an immunologically active peptide, from the cell wall (PubMed:24434550).</text>
</comment>
<comment type="catalytic activity">
    <reaction evidence="6">
        <text>Hydrolysis of the -Gly-|-Gly- bond in the pentaglycine inter-peptide link joining staphylococcal cell wall peptidoglycans.</text>
        <dbReference type="EC" id="3.4.24.75"/>
    </reaction>
</comment>
<comment type="cofactor">
    <cofactor>
        <name>Zn(2+)</name>
        <dbReference type="ChEBI" id="CHEBI:29105"/>
    </cofactor>
    <text evidence="1">Binds 1 zinc ion per subunit.</text>
</comment>
<comment type="subunit">
    <text>Monomer.</text>
</comment>
<comment type="subcellular location">
    <subcellularLocation>
        <location evidence="1">Secreted</location>
    </subcellularLocation>
</comment>
<comment type="disruption phenotype">
    <text evidence="4">Much less SpA is released from the cell wall.</text>
</comment>
<comment type="similarity">
    <text evidence="5">Belongs to the peptidase M23B family.</text>
</comment>
<comment type="sequence caution" evidence="5">
    <conflict type="erroneous initiation">
        <sequence resource="EMBL-CDS" id="BAF66482"/>
    </conflict>
    <text>Truncated N-terminus.</text>
</comment>
<reference key="1">
    <citation type="journal article" date="2008" name="J. Bacteriol.">
        <title>Genome sequence of Staphylococcus aureus strain Newman and comparative analysis of staphylococcal genomes: polymorphism and evolution of two major pathogenicity islands.</title>
        <authorList>
            <person name="Baba T."/>
            <person name="Bae T."/>
            <person name="Schneewind O."/>
            <person name="Takeuchi F."/>
            <person name="Hiramatsu K."/>
        </authorList>
    </citation>
    <scope>NUCLEOTIDE SEQUENCE [LARGE SCALE GENOMIC DNA]</scope>
    <source>
        <strain>Newman</strain>
    </source>
</reference>
<reference key="2">
    <citation type="journal article" date="2014" name="Proc. Natl. Acad. Sci. U.S.A.">
        <title>Release of protein A from the cell wall of Staphylococcus aureus.</title>
        <authorList>
            <person name="Becker S."/>
            <person name="Frankel M.B."/>
            <person name="Schneewind O."/>
            <person name="Missiakas D."/>
        </authorList>
    </citation>
    <scope>FUNCTION</scope>
    <scope>DISRUPTION PHENOTYPE</scope>
    <source>
        <strain>Newman</strain>
    </source>
</reference>
<gene>
    <name type="primary">lytM</name>
    <name type="ordered locus">NWMN_0210</name>
</gene>
<accession>A0A0H3K6J4</accession>
<name>LYTM_STAAE</name>
<sequence>MKKLTAAAIATMGFATFTMAHQADAAETTNTQQAHTQMSTQSQDVSYGTYYTIDSNGDYHHTPDGNWNQAMFDNKEYSYTFVDAQGHTHYFYNCYPKNANANGSGQTYVNPATAGDNNDYTASQSQQHINQYGYQSNVGPDASYYSHSNNNQAYNSHDGNGKVNYPNGTSNQNGGSASKATASGHAKDASWLTSRKQLQPYGQYHGGGAHYGVDYAMPENSPVYSLTDGTVVQAGWSNYGGGNQVTIKEANSNNYQWYMHNNRLTVSAGDKVKAGDQIAYSGSTGNSTAPHVHFQRMSGGIGNQYAVDPTSYLQSR</sequence>
<protein>
    <recommendedName>
        <fullName>Glycyl-glycine endopeptidase LytM</fullName>
        <ecNumber>3.4.24.75</ecNumber>
    </recommendedName>
    <alternativeName>
        <fullName>Autolysin LytM</fullName>
    </alternativeName>
</protein>